<feature type="chain" id="PRO_0000357760" description="NADH-quinone oxidoreductase subunit D">
    <location>
        <begin position="1"/>
        <end position="417"/>
    </location>
</feature>
<organism>
    <name type="scientific">Azoarcus sp. (strain BH72)</name>
    <dbReference type="NCBI Taxonomy" id="418699"/>
    <lineage>
        <taxon>Bacteria</taxon>
        <taxon>Pseudomonadati</taxon>
        <taxon>Pseudomonadota</taxon>
        <taxon>Betaproteobacteria</taxon>
        <taxon>Rhodocyclales</taxon>
        <taxon>Zoogloeaceae</taxon>
        <taxon>Azoarcus</taxon>
    </lineage>
</organism>
<dbReference type="EC" id="7.1.1.-" evidence="1"/>
<dbReference type="EMBL" id="AM406670">
    <property type="protein sequence ID" value="CAL94016.1"/>
    <property type="molecule type" value="Genomic_DNA"/>
</dbReference>
<dbReference type="RefSeq" id="WP_011765132.1">
    <property type="nucleotide sequence ID" value="NC_008702.1"/>
</dbReference>
<dbReference type="SMR" id="A1K5B1"/>
<dbReference type="STRING" id="62928.azo1399"/>
<dbReference type="KEGG" id="aoa:dqs_1523"/>
<dbReference type="KEGG" id="azo:azo1399"/>
<dbReference type="eggNOG" id="COG0649">
    <property type="taxonomic scope" value="Bacteria"/>
</dbReference>
<dbReference type="HOGENOM" id="CLU_015134_1_1_4"/>
<dbReference type="OrthoDB" id="9801496at2"/>
<dbReference type="Proteomes" id="UP000002588">
    <property type="component" value="Chromosome"/>
</dbReference>
<dbReference type="GO" id="GO:0005886">
    <property type="term" value="C:plasma membrane"/>
    <property type="evidence" value="ECO:0007669"/>
    <property type="project" value="UniProtKB-SubCell"/>
</dbReference>
<dbReference type="GO" id="GO:0051287">
    <property type="term" value="F:NAD binding"/>
    <property type="evidence" value="ECO:0007669"/>
    <property type="project" value="InterPro"/>
</dbReference>
<dbReference type="GO" id="GO:0050136">
    <property type="term" value="F:NADH:ubiquinone reductase (non-electrogenic) activity"/>
    <property type="evidence" value="ECO:0007669"/>
    <property type="project" value="UniProtKB-UniRule"/>
</dbReference>
<dbReference type="GO" id="GO:0048038">
    <property type="term" value="F:quinone binding"/>
    <property type="evidence" value="ECO:0007669"/>
    <property type="project" value="UniProtKB-KW"/>
</dbReference>
<dbReference type="FunFam" id="1.10.645.10:FF:000005">
    <property type="entry name" value="NADH-quinone oxidoreductase subunit D"/>
    <property type="match status" value="1"/>
</dbReference>
<dbReference type="Gene3D" id="1.10.645.10">
    <property type="entry name" value="Cytochrome-c3 Hydrogenase, chain B"/>
    <property type="match status" value="1"/>
</dbReference>
<dbReference type="HAMAP" id="MF_01358">
    <property type="entry name" value="NDH1_NuoD"/>
    <property type="match status" value="1"/>
</dbReference>
<dbReference type="InterPro" id="IPR001135">
    <property type="entry name" value="NADH_Q_OxRdtase_suD"/>
</dbReference>
<dbReference type="InterPro" id="IPR014029">
    <property type="entry name" value="NADH_UbQ_OxRdtase_49kDa_CS"/>
</dbReference>
<dbReference type="InterPro" id="IPR022885">
    <property type="entry name" value="NDH1_su_D/H"/>
</dbReference>
<dbReference type="InterPro" id="IPR029014">
    <property type="entry name" value="NiFe-Hase_large"/>
</dbReference>
<dbReference type="NCBIfam" id="TIGR01962">
    <property type="entry name" value="NuoD"/>
    <property type="match status" value="1"/>
</dbReference>
<dbReference type="NCBIfam" id="NF004739">
    <property type="entry name" value="PRK06075.1"/>
    <property type="match status" value="1"/>
</dbReference>
<dbReference type="PANTHER" id="PTHR11993:SF10">
    <property type="entry name" value="NADH DEHYDROGENASE [UBIQUINONE] IRON-SULFUR PROTEIN 2, MITOCHONDRIAL"/>
    <property type="match status" value="1"/>
</dbReference>
<dbReference type="PANTHER" id="PTHR11993">
    <property type="entry name" value="NADH-UBIQUINONE OXIDOREDUCTASE 49 KDA SUBUNIT"/>
    <property type="match status" value="1"/>
</dbReference>
<dbReference type="Pfam" id="PF00346">
    <property type="entry name" value="Complex1_49kDa"/>
    <property type="match status" value="2"/>
</dbReference>
<dbReference type="SUPFAM" id="SSF56762">
    <property type="entry name" value="HydB/Nqo4-like"/>
    <property type="match status" value="1"/>
</dbReference>
<dbReference type="PROSITE" id="PS00535">
    <property type="entry name" value="COMPLEX1_49K"/>
    <property type="match status" value="1"/>
</dbReference>
<gene>
    <name evidence="1" type="primary">nuoD</name>
    <name type="ordered locus">azo1399</name>
</gene>
<sequence length="417" mass="47815">MAEIRNYTINFGPQHPSAHGVLRLVLELDGEVVERADPHIGLLHRGTEKLAETRTWVQSVPYMDRLDYVSMMCNEHAYCMAIERLLGVEVPLRAQYIRVMFDEITRILNHLLNIGTHALDIGAMTMVLYTFREREDLMDAYEAVSGARMHAAYYRPGGVYRDLPDRMPQYQPNKFKNANVVKDLNAARQGSLLDFLDDFTQRFPRYCDEYETLLTDNRIWKQRTVGIGVVTPEQALAWGFSGPMIRGSGIAWDLRKKQPYEVYDKVDFDIPVGKNGDCYDRYLCRMEEMRQSNRIIRQCIDWLRKNPGPVITDNHKVAPPSREQMKSNMEELIHHFKLFTEGMHVPKGEAYAAVEHPKGEFGVYAVSDGANKPYRLKLRAPGFAHLAAMDEISRGHMIADVVAIIGTMDVVFGEIDR</sequence>
<name>NUOD_AZOSB</name>
<accession>A1K5B1</accession>
<keyword id="KW-0997">Cell inner membrane</keyword>
<keyword id="KW-1003">Cell membrane</keyword>
<keyword id="KW-0472">Membrane</keyword>
<keyword id="KW-0520">NAD</keyword>
<keyword id="KW-0874">Quinone</keyword>
<keyword id="KW-1185">Reference proteome</keyword>
<keyword id="KW-1278">Translocase</keyword>
<keyword id="KW-0813">Transport</keyword>
<keyword id="KW-0830">Ubiquinone</keyword>
<proteinExistence type="inferred from homology"/>
<comment type="function">
    <text evidence="1">NDH-1 shuttles electrons from NADH, via FMN and iron-sulfur (Fe-S) centers, to quinones in the respiratory chain. The immediate electron acceptor for the enzyme in this species is believed to be ubiquinone. Couples the redox reaction to proton translocation (for every two electrons transferred, four hydrogen ions are translocated across the cytoplasmic membrane), and thus conserves the redox energy in a proton gradient.</text>
</comment>
<comment type="catalytic activity">
    <reaction evidence="1">
        <text>a quinone + NADH + 5 H(+)(in) = a quinol + NAD(+) + 4 H(+)(out)</text>
        <dbReference type="Rhea" id="RHEA:57888"/>
        <dbReference type="ChEBI" id="CHEBI:15378"/>
        <dbReference type="ChEBI" id="CHEBI:24646"/>
        <dbReference type="ChEBI" id="CHEBI:57540"/>
        <dbReference type="ChEBI" id="CHEBI:57945"/>
        <dbReference type="ChEBI" id="CHEBI:132124"/>
    </reaction>
</comment>
<comment type="subunit">
    <text evidence="1">NDH-1 is composed of 14 different subunits. Subunits NuoB, C, D, E, F, and G constitute the peripheral sector of the complex.</text>
</comment>
<comment type="subcellular location">
    <subcellularLocation>
        <location evidence="1">Cell inner membrane</location>
        <topology evidence="1">Peripheral membrane protein</topology>
        <orientation evidence="1">Cytoplasmic side</orientation>
    </subcellularLocation>
</comment>
<comment type="similarity">
    <text evidence="1">Belongs to the complex I 49 kDa subunit family.</text>
</comment>
<reference key="1">
    <citation type="journal article" date="2006" name="Nat. Biotechnol.">
        <title>Complete genome of the mutualistic, N2-fixing grass endophyte Azoarcus sp. strain BH72.</title>
        <authorList>
            <person name="Krause A."/>
            <person name="Ramakumar A."/>
            <person name="Bartels D."/>
            <person name="Battistoni F."/>
            <person name="Bekel T."/>
            <person name="Boch J."/>
            <person name="Boehm M."/>
            <person name="Friedrich F."/>
            <person name="Hurek T."/>
            <person name="Krause L."/>
            <person name="Linke B."/>
            <person name="McHardy A.C."/>
            <person name="Sarkar A."/>
            <person name="Schneiker S."/>
            <person name="Syed A.A."/>
            <person name="Thauer R."/>
            <person name="Vorhoelter F.-J."/>
            <person name="Weidner S."/>
            <person name="Puehler A."/>
            <person name="Reinhold-Hurek B."/>
            <person name="Kaiser O."/>
            <person name="Goesmann A."/>
        </authorList>
    </citation>
    <scope>NUCLEOTIDE SEQUENCE [LARGE SCALE GENOMIC DNA]</scope>
    <source>
        <strain>BH72</strain>
    </source>
</reference>
<evidence type="ECO:0000255" key="1">
    <source>
        <dbReference type="HAMAP-Rule" id="MF_01358"/>
    </source>
</evidence>
<protein>
    <recommendedName>
        <fullName evidence="1">NADH-quinone oxidoreductase subunit D</fullName>
        <ecNumber evidence="1">7.1.1.-</ecNumber>
    </recommendedName>
    <alternativeName>
        <fullName evidence="1">NADH dehydrogenase I subunit D</fullName>
    </alternativeName>
    <alternativeName>
        <fullName evidence="1">NDH-1 subunit D</fullName>
    </alternativeName>
</protein>